<keyword id="KW-0687">Ribonucleoprotein</keyword>
<keyword id="KW-0689">Ribosomal protein</keyword>
<keyword id="KW-0694">RNA-binding</keyword>
<keyword id="KW-0699">rRNA-binding</keyword>
<keyword id="KW-0820">tRNA-binding</keyword>
<gene>
    <name evidence="1" type="primary">rplP</name>
    <name type="ordered locus">DMR_12270</name>
</gene>
<reference key="1">
    <citation type="journal article" date="2009" name="Genome Res.">
        <title>Whole genome sequence of Desulfovibrio magneticus strain RS-1 revealed common gene clusters in magnetotactic bacteria.</title>
        <authorList>
            <person name="Nakazawa H."/>
            <person name="Arakaki A."/>
            <person name="Narita-Yamada S."/>
            <person name="Yashiro I."/>
            <person name="Jinno K."/>
            <person name="Aoki N."/>
            <person name="Tsuruyama A."/>
            <person name="Okamura Y."/>
            <person name="Tanikawa S."/>
            <person name="Fujita N."/>
            <person name="Takeyama H."/>
            <person name="Matsunaga T."/>
        </authorList>
    </citation>
    <scope>NUCLEOTIDE SEQUENCE [LARGE SCALE GENOMIC DNA]</scope>
    <source>
        <strain>ATCC 700980 / DSM 13731 / RS-1</strain>
    </source>
</reference>
<sequence>MLAPKKTKFRKMQKGRLRGPALRGASIDFGEIGIKALEHGKLTSQQIESARIAIMRHIKRGGKVWIRVFPDRVRTEKPAEVRQGKGKGSPVGWFAPVKPGRVLYEIKGVDIETAKEALTRAQHKLPIKTKIVVKEGL</sequence>
<evidence type="ECO:0000255" key="1">
    <source>
        <dbReference type="HAMAP-Rule" id="MF_01342"/>
    </source>
</evidence>
<evidence type="ECO:0000305" key="2"/>
<protein>
    <recommendedName>
        <fullName evidence="1">Large ribosomal subunit protein uL16</fullName>
    </recommendedName>
    <alternativeName>
        <fullName evidence="2">50S ribosomal protein L16</fullName>
    </alternativeName>
</protein>
<organism>
    <name type="scientific">Solidesulfovibrio magneticus (strain ATCC 700980 / DSM 13731 / RS-1)</name>
    <name type="common">Desulfovibrio magneticus</name>
    <dbReference type="NCBI Taxonomy" id="573370"/>
    <lineage>
        <taxon>Bacteria</taxon>
        <taxon>Pseudomonadati</taxon>
        <taxon>Thermodesulfobacteriota</taxon>
        <taxon>Desulfovibrionia</taxon>
        <taxon>Desulfovibrionales</taxon>
        <taxon>Desulfovibrionaceae</taxon>
        <taxon>Solidesulfovibrio</taxon>
    </lineage>
</organism>
<dbReference type="EMBL" id="AP010904">
    <property type="protein sequence ID" value="BAH74718.1"/>
    <property type="molecule type" value="Genomic_DNA"/>
</dbReference>
<dbReference type="RefSeq" id="WP_015859935.1">
    <property type="nucleotide sequence ID" value="NC_012796.1"/>
</dbReference>
<dbReference type="SMR" id="C4XLY0"/>
<dbReference type="STRING" id="573370.DMR_12270"/>
<dbReference type="KEGG" id="dma:DMR_12270"/>
<dbReference type="eggNOG" id="COG0197">
    <property type="taxonomic scope" value="Bacteria"/>
</dbReference>
<dbReference type="HOGENOM" id="CLU_078858_2_1_7"/>
<dbReference type="OrthoDB" id="9802589at2"/>
<dbReference type="Proteomes" id="UP000009071">
    <property type="component" value="Chromosome"/>
</dbReference>
<dbReference type="GO" id="GO:0022625">
    <property type="term" value="C:cytosolic large ribosomal subunit"/>
    <property type="evidence" value="ECO:0007669"/>
    <property type="project" value="TreeGrafter"/>
</dbReference>
<dbReference type="GO" id="GO:0019843">
    <property type="term" value="F:rRNA binding"/>
    <property type="evidence" value="ECO:0007669"/>
    <property type="project" value="UniProtKB-UniRule"/>
</dbReference>
<dbReference type="GO" id="GO:0003735">
    <property type="term" value="F:structural constituent of ribosome"/>
    <property type="evidence" value="ECO:0007669"/>
    <property type="project" value="InterPro"/>
</dbReference>
<dbReference type="GO" id="GO:0000049">
    <property type="term" value="F:tRNA binding"/>
    <property type="evidence" value="ECO:0007669"/>
    <property type="project" value="UniProtKB-KW"/>
</dbReference>
<dbReference type="GO" id="GO:0006412">
    <property type="term" value="P:translation"/>
    <property type="evidence" value="ECO:0007669"/>
    <property type="project" value="UniProtKB-UniRule"/>
</dbReference>
<dbReference type="CDD" id="cd01433">
    <property type="entry name" value="Ribosomal_L16_L10e"/>
    <property type="match status" value="1"/>
</dbReference>
<dbReference type="FunFam" id="3.90.1170.10:FF:000001">
    <property type="entry name" value="50S ribosomal protein L16"/>
    <property type="match status" value="1"/>
</dbReference>
<dbReference type="Gene3D" id="3.90.1170.10">
    <property type="entry name" value="Ribosomal protein L10e/L16"/>
    <property type="match status" value="1"/>
</dbReference>
<dbReference type="HAMAP" id="MF_01342">
    <property type="entry name" value="Ribosomal_uL16"/>
    <property type="match status" value="1"/>
</dbReference>
<dbReference type="InterPro" id="IPR047873">
    <property type="entry name" value="Ribosomal_uL16"/>
</dbReference>
<dbReference type="InterPro" id="IPR000114">
    <property type="entry name" value="Ribosomal_uL16_bact-type"/>
</dbReference>
<dbReference type="InterPro" id="IPR020798">
    <property type="entry name" value="Ribosomal_uL16_CS"/>
</dbReference>
<dbReference type="InterPro" id="IPR016180">
    <property type="entry name" value="Ribosomal_uL16_dom"/>
</dbReference>
<dbReference type="InterPro" id="IPR036920">
    <property type="entry name" value="Ribosomal_uL16_sf"/>
</dbReference>
<dbReference type="NCBIfam" id="TIGR01164">
    <property type="entry name" value="rplP_bact"/>
    <property type="match status" value="1"/>
</dbReference>
<dbReference type="PANTHER" id="PTHR12220">
    <property type="entry name" value="50S/60S RIBOSOMAL PROTEIN L16"/>
    <property type="match status" value="1"/>
</dbReference>
<dbReference type="PANTHER" id="PTHR12220:SF13">
    <property type="entry name" value="LARGE RIBOSOMAL SUBUNIT PROTEIN UL16M"/>
    <property type="match status" value="1"/>
</dbReference>
<dbReference type="Pfam" id="PF00252">
    <property type="entry name" value="Ribosomal_L16"/>
    <property type="match status" value="1"/>
</dbReference>
<dbReference type="PRINTS" id="PR00060">
    <property type="entry name" value="RIBOSOMALL16"/>
</dbReference>
<dbReference type="SUPFAM" id="SSF54686">
    <property type="entry name" value="Ribosomal protein L16p/L10e"/>
    <property type="match status" value="1"/>
</dbReference>
<dbReference type="PROSITE" id="PS00586">
    <property type="entry name" value="RIBOSOMAL_L16_1"/>
    <property type="match status" value="1"/>
</dbReference>
<accession>C4XLY0</accession>
<proteinExistence type="inferred from homology"/>
<feature type="chain" id="PRO_1000214727" description="Large ribosomal subunit protein uL16">
    <location>
        <begin position="1"/>
        <end position="137"/>
    </location>
</feature>
<comment type="function">
    <text evidence="1">Binds 23S rRNA and is also seen to make contacts with the A and possibly P site tRNAs.</text>
</comment>
<comment type="subunit">
    <text evidence="1">Part of the 50S ribosomal subunit.</text>
</comment>
<comment type="similarity">
    <text evidence="1">Belongs to the universal ribosomal protein uL16 family.</text>
</comment>
<name>RL16_SOLM1</name>